<proteinExistence type="evidence at protein level"/>
<sequence>MATAVSRPCAGRSRDILWRVLGWRIVASIVWSVLFLPICTTVFIIFSRIDLFHPIQWLSDSFSDLYSSYVIFYFLLLSVVIIIISIFNVEFYAVVPSIPCSRLALIGKIIHPQQLMHSFIHAAMGMVMAWCAAVITQGQYSFLVVPCTGTNSFGSPAAQTCLNEYHLFFLLTGAFMGYSYSLLYFVNNMNYLPFPIIQQYKFLRFRRSLLLLVKHSCVESLFLVRNFCILYYFLGYIPKAWISTAMNLHIDEQVHRPLDTVSGLLNLSLLYHVWLCGVFLLTTWYVSWILFKIYATEAHVFPVQPPFAEGSDECLPKVLNSNPPPIIKYLALQDLMLLSQYSPSRRQEVFSLSQPGGHPHNWTAISRECLNLLNGMTQKLILYQEAAATNGRVSSSYPVEPKKLNSPEETAFQTPKSSQMPRPSVPPLVKTSLFSSKLSTPDVVSPFGTPFGSSVMNRMAGIFDVNTCYGSPQSPQLIRRGPRLWTSASDQQMTEFSNPSPSTSISAEGKTMRQPSVIYSWIQNKREQIKNFLSKRVLIMYFFSKHPEASIQAVFSDAQMHIWALEGLSHLVAASFTEDRFGVVQTTLPAILNTLLTLQEAVDKYFKLPHASSKPPRISGSLVDTSYKTLRFAFRASLKTAIYRITTTFGEHLNAVQASAEHQKRLQQFLEFKE</sequence>
<dbReference type="EMBL" id="DQ141696">
    <property type="protein sequence ID" value="AAZ73087.1"/>
    <property type="molecule type" value="mRNA"/>
</dbReference>
<dbReference type="EMBL" id="AK001269">
    <property type="protein sequence ID" value="BAA91592.1"/>
    <property type="molecule type" value="mRNA"/>
</dbReference>
<dbReference type="EMBL" id="AK022618">
    <property type="protein sequence ID" value="BAB14135.1"/>
    <property type="status" value="ALT_INIT"/>
    <property type="molecule type" value="mRNA"/>
</dbReference>
<dbReference type="EMBL" id="AK091439">
    <property type="protein sequence ID" value="BAC03665.1"/>
    <property type="status" value="ALT_INIT"/>
    <property type="molecule type" value="mRNA"/>
</dbReference>
<dbReference type="EMBL" id="AK298909">
    <property type="protein sequence ID" value="BAG61017.1"/>
    <property type="molecule type" value="mRNA"/>
</dbReference>
<dbReference type="EMBL" id="AK295000">
    <property type="protein sequence ID" value="BAG58064.1"/>
    <property type="molecule type" value="mRNA"/>
</dbReference>
<dbReference type="EMBL" id="AL354612">
    <property type="protein sequence ID" value="CAB89725.1"/>
    <property type="molecule type" value="mRNA"/>
</dbReference>
<dbReference type="EMBL" id="AL354613">
    <property type="protein sequence ID" value="CAB89726.1"/>
    <property type="molecule type" value="mRNA"/>
</dbReference>
<dbReference type="EMBL" id="AL049745">
    <property type="status" value="NOT_ANNOTATED_CDS"/>
    <property type="molecule type" value="Genomic_DNA"/>
</dbReference>
<dbReference type="EMBL" id="CH471059">
    <property type="protein sequence ID" value="EAX06731.1"/>
    <property type="molecule type" value="Genomic_DNA"/>
</dbReference>
<dbReference type="EMBL" id="BC003082">
    <property type="protein sequence ID" value="AAH03082.1"/>
    <property type="molecule type" value="mRNA"/>
</dbReference>
<dbReference type="CCDS" id="CCDS583.1">
    <molecule id="Q9BTX1-1"/>
</dbReference>
<dbReference type="RefSeq" id="NP_001162023.1">
    <molecule id="Q9BTX1-5"/>
    <property type="nucleotide sequence ID" value="NM_001168551.2"/>
</dbReference>
<dbReference type="RefSeq" id="NP_060557.3">
    <molecule id="Q9BTX1-1"/>
    <property type="nucleotide sequence ID" value="NM_018087.4"/>
</dbReference>
<dbReference type="PDB" id="7R5J">
    <property type="method" value="EM"/>
    <property type="resolution" value="50.00 A"/>
    <property type="chains" value="E0/E1=1-674"/>
</dbReference>
<dbReference type="PDB" id="7R5K">
    <property type="method" value="EM"/>
    <property type="resolution" value="12.00 A"/>
    <property type="chains" value="E0/E1=1-674"/>
</dbReference>
<dbReference type="PDBsum" id="7R5J"/>
<dbReference type="PDBsum" id="7R5K"/>
<dbReference type="EMDB" id="EMD-14321"/>
<dbReference type="EMDB" id="EMD-14322"/>
<dbReference type="SMR" id="Q9BTX1"/>
<dbReference type="BioGRID" id="120831">
    <property type="interactions" value="231"/>
</dbReference>
<dbReference type="ComplexPortal" id="CPX-873">
    <property type="entry name" value="Nuclear pore complex"/>
</dbReference>
<dbReference type="CORUM" id="Q9BTX1"/>
<dbReference type="FunCoup" id="Q9BTX1">
    <property type="interactions" value="2044"/>
</dbReference>
<dbReference type="IntAct" id="Q9BTX1">
    <property type="interactions" value="103"/>
</dbReference>
<dbReference type="MINT" id="Q9BTX1"/>
<dbReference type="STRING" id="9606.ENSP00000360483"/>
<dbReference type="TCDB" id="1.I.1.1.3">
    <property type="family name" value="the nuclear pore complex (npc) family"/>
</dbReference>
<dbReference type="GlyCosmos" id="Q9BTX1">
    <property type="glycosylation" value="1 site, 1 glycan"/>
</dbReference>
<dbReference type="GlyGen" id="Q9BTX1">
    <property type="glycosylation" value="3 sites, 1 N-linked glycan (1 site), 1 O-linked glycan (2 sites)"/>
</dbReference>
<dbReference type="iPTMnet" id="Q9BTX1"/>
<dbReference type="PhosphoSitePlus" id="Q9BTX1"/>
<dbReference type="SwissPalm" id="Q9BTX1"/>
<dbReference type="BioMuta" id="NDC1"/>
<dbReference type="DMDM" id="97180263"/>
<dbReference type="jPOST" id="Q9BTX1"/>
<dbReference type="MassIVE" id="Q9BTX1"/>
<dbReference type="PaxDb" id="9606-ENSP00000360483"/>
<dbReference type="PeptideAtlas" id="Q9BTX1"/>
<dbReference type="ProteomicsDB" id="33675"/>
<dbReference type="ProteomicsDB" id="79021">
    <molecule id="Q9BTX1-1"/>
</dbReference>
<dbReference type="ProteomicsDB" id="79022">
    <molecule id="Q9BTX1-2"/>
</dbReference>
<dbReference type="ProteomicsDB" id="79023">
    <molecule id="Q9BTX1-3"/>
</dbReference>
<dbReference type="ProteomicsDB" id="79024">
    <molecule id="Q9BTX1-4"/>
</dbReference>
<dbReference type="Pumba" id="Q9BTX1"/>
<dbReference type="Antibodypedia" id="33093">
    <property type="antibodies" value="61 antibodies from 18 providers"/>
</dbReference>
<dbReference type="DNASU" id="55706"/>
<dbReference type="Ensembl" id="ENST00000371429.4">
    <molecule id="Q9BTX1-1"/>
    <property type="protein sequence ID" value="ENSP00000360483.3"/>
    <property type="gene ID" value="ENSG00000058804.12"/>
</dbReference>
<dbReference type="GeneID" id="55706"/>
<dbReference type="KEGG" id="hsa:55706"/>
<dbReference type="MANE-Select" id="ENST00000371429.4">
    <property type="protein sequence ID" value="ENSP00000360483.3"/>
    <property type="RefSeq nucleotide sequence ID" value="NM_018087.5"/>
    <property type="RefSeq protein sequence ID" value="NP_060557.3"/>
</dbReference>
<dbReference type="UCSC" id="uc001cvs.4">
    <molecule id="Q9BTX1-1"/>
    <property type="organism name" value="human"/>
</dbReference>
<dbReference type="AGR" id="HGNC:25525"/>
<dbReference type="CTD" id="55706"/>
<dbReference type="DisGeNET" id="55706"/>
<dbReference type="GeneCards" id="NDC1"/>
<dbReference type="HGNC" id="HGNC:25525">
    <property type="gene designation" value="NDC1"/>
</dbReference>
<dbReference type="HPA" id="ENSG00000058804">
    <property type="expression patterns" value="Low tissue specificity"/>
</dbReference>
<dbReference type="MIM" id="610115">
    <property type="type" value="gene"/>
</dbReference>
<dbReference type="neXtProt" id="NX_Q9BTX1"/>
<dbReference type="OpenTargets" id="ENSG00000058804"/>
<dbReference type="PharmGKB" id="PA142670764"/>
<dbReference type="VEuPathDB" id="HostDB:ENSG00000058804"/>
<dbReference type="eggNOG" id="KOG4358">
    <property type="taxonomic scope" value="Eukaryota"/>
</dbReference>
<dbReference type="GeneTree" id="ENSGT00390000014590"/>
<dbReference type="HOGENOM" id="CLU_027343_0_0_1"/>
<dbReference type="InParanoid" id="Q9BTX1"/>
<dbReference type="OMA" id="ILCQQHL"/>
<dbReference type="OrthoDB" id="67850at2759"/>
<dbReference type="PAN-GO" id="Q9BTX1">
    <property type="GO annotations" value="3 GO annotations based on evolutionary models"/>
</dbReference>
<dbReference type="PhylomeDB" id="Q9BTX1"/>
<dbReference type="TreeFam" id="TF324843"/>
<dbReference type="PathwayCommons" id="Q9BTX1"/>
<dbReference type="Reactome" id="R-HSA-1169408">
    <property type="pathway name" value="ISG15 antiviral mechanism"/>
</dbReference>
<dbReference type="Reactome" id="R-HSA-159227">
    <property type="pathway name" value="Transport of the SLBP independent Mature mRNA"/>
</dbReference>
<dbReference type="Reactome" id="R-HSA-159230">
    <property type="pathway name" value="Transport of the SLBP Dependant Mature mRNA"/>
</dbReference>
<dbReference type="Reactome" id="R-HSA-159231">
    <property type="pathway name" value="Transport of Mature mRNA Derived from an Intronless Transcript"/>
</dbReference>
<dbReference type="Reactome" id="R-HSA-159236">
    <property type="pathway name" value="Transport of Mature mRNA derived from an Intron-Containing Transcript"/>
</dbReference>
<dbReference type="Reactome" id="R-HSA-165054">
    <property type="pathway name" value="Rev-mediated nuclear export of HIV RNA"/>
</dbReference>
<dbReference type="Reactome" id="R-HSA-168271">
    <property type="pathway name" value="Transport of Ribonucleoproteins into the Host Nucleus"/>
</dbReference>
<dbReference type="Reactome" id="R-HSA-168276">
    <property type="pathway name" value="NS1 Mediated Effects on Host Pathways"/>
</dbReference>
<dbReference type="Reactome" id="R-HSA-168325">
    <property type="pathway name" value="Viral Messenger RNA Synthesis"/>
</dbReference>
<dbReference type="Reactome" id="R-HSA-168333">
    <property type="pathway name" value="NEP/NS2 Interacts with the Cellular Export Machinery"/>
</dbReference>
<dbReference type="Reactome" id="R-HSA-170822">
    <property type="pathway name" value="Regulation of Glucokinase by Glucokinase Regulatory Protein"/>
</dbReference>
<dbReference type="Reactome" id="R-HSA-180746">
    <property type="pathway name" value="Nuclear import of Rev protein"/>
</dbReference>
<dbReference type="Reactome" id="R-HSA-180910">
    <property type="pathway name" value="Vpr-mediated nuclear import of PICs"/>
</dbReference>
<dbReference type="Reactome" id="R-HSA-191859">
    <property type="pathway name" value="snRNP Assembly"/>
</dbReference>
<dbReference type="Reactome" id="R-HSA-3108214">
    <property type="pathway name" value="SUMOylation of DNA damage response and repair proteins"/>
</dbReference>
<dbReference type="Reactome" id="R-HSA-3232142">
    <property type="pathway name" value="SUMOylation of ubiquitinylation proteins"/>
</dbReference>
<dbReference type="Reactome" id="R-HSA-3301854">
    <property type="pathway name" value="Nuclear Pore Complex (NPC) Disassembly"/>
</dbReference>
<dbReference type="Reactome" id="R-HSA-3371453">
    <property type="pathway name" value="Regulation of HSF1-mediated heat shock response"/>
</dbReference>
<dbReference type="Reactome" id="R-HSA-4085377">
    <property type="pathway name" value="SUMOylation of SUMOylation proteins"/>
</dbReference>
<dbReference type="Reactome" id="R-HSA-4551638">
    <property type="pathway name" value="SUMOylation of chromatin organization proteins"/>
</dbReference>
<dbReference type="Reactome" id="R-HSA-4570464">
    <property type="pathway name" value="SUMOylation of RNA binding proteins"/>
</dbReference>
<dbReference type="Reactome" id="R-HSA-4615885">
    <property type="pathway name" value="SUMOylation of DNA replication proteins"/>
</dbReference>
<dbReference type="Reactome" id="R-HSA-5578749">
    <property type="pathway name" value="Transcriptional regulation by small RNAs"/>
</dbReference>
<dbReference type="Reactome" id="R-HSA-5619107">
    <property type="pathway name" value="Defective TPR may confer susceptibility towards thyroid papillary carcinoma (TPC)"/>
</dbReference>
<dbReference type="Reactome" id="R-HSA-6784531">
    <property type="pathway name" value="tRNA processing in the nucleus"/>
</dbReference>
<dbReference type="Reactome" id="R-HSA-9609690">
    <property type="pathway name" value="HCMV Early Events"/>
</dbReference>
<dbReference type="Reactome" id="R-HSA-9610379">
    <property type="pathway name" value="HCMV Late Events"/>
</dbReference>
<dbReference type="Reactome" id="R-HSA-9615933">
    <property type="pathway name" value="Postmitotic nuclear pore complex (NPC) reformation"/>
</dbReference>
<dbReference type="Reactome" id="R-HSA-9705671">
    <property type="pathway name" value="SARS-CoV-2 activates/modulates innate and adaptive immune responses"/>
</dbReference>
<dbReference type="SignaLink" id="Q9BTX1"/>
<dbReference type="SIGNOR" id="Q9BTX1"/>
<dbReference type="BioGRID-ORCS" id="55706">
    <property type="hits" value="466 hits in 1130 CRISPR screens"/>
</dbReference>
<dbReference type="ChiTaRS" id="NDC1">
    <property type="organism name" value="human"/>
</dbReference>
<dbReference type="GeneWiki" id="TMEM48"/>
<dbReference type="GenomeRNAi" id="55706"/>
<dbReference type="Pharos" id="Q9BTX1">
    <property type="development level" value="Tbio"/>
</dbReference>
<dbReference type="PRO" id="PR:Q9BTX1"/>
<dbReference type="Proteomes" id="UP000005640">
    <property type="component" value="Chromosome 1"/>
</dbReference>
<dbReference type="RNAct" id="Q9BTX1">
    <property type="molecule type" value="protein"/>
</dbReference>
<dbReference type="Bgee" id="ENSG00000058804">
    <property type="expression patterns" value="Expressed in secondary oocyte and 187 other cell types or tissues"/>
</dbReference>
<dbReference type="GO" id="GO:0015629">
    <property type="term" value="C:actin cytoskeleton"/>
    <property type="evidence" value="ECO:0000314"/>
    <property type="project" value="HPA"/>
</dbReference>
<dbReference type="GO" id="GO:0005737">
    <property type="term" value="C:cytoplasm"/>
    <property type="evidence" value="ECO:0007669"/>
    <property type="project" value="Ensembl"/>
</dbReference>
<dbReference type="GO" id="GO:0016020">
    <property type="term" value="C:membrane"/>
    <property type="evidence" value="ECO:0007005"/>
    <property type="project" value="UniProtKB"/>
</dbReference>
<dbReference type="GO" id="GO:0005635">
    <property type="term" value="C:nuclear envelope"/>
    <property type="evidence" value="ECO:0000314"/>
    <property type="project" value="ComplexPortal"/>
</dbReference>
<dbReference type="GO" id="GO:0031965">
    <property type="term" value="C:nuclear membrane"/>
    <property type="evidence" value="ECO:0000314"/>
    <property type="project" value="HPA"/>
</dbReference>
<dbReference type="GO" id="GO:0005643">
    <property type="term" value="C:nuclear pore"/>
    <property type="evidence" value="ECO:0000314"/>
    <property type="project" value="UniProtKB"/>
</dbReference>
<dbReference type="GO" id="GO:0070762">
    <property type="term" value="C:nuclear pore transmembrane ring"/>
    <property type="evidence" value="ECO:0000318"/>
    <property type="project" value="GO_Central"/>
</dbReference>
<dbReference type="GO" id="GO:0005886">
    <property type="term" value="C:plasma membrane"/>
    <property type="evidence" value="ECO:0000314"/>
    <property type="project" value="HPA"/>
</dbReference>
<dbReference type="GO" id="GO:0030674">
    <property type="term" value="F:protein-macromolecule adaptor activity"/>
    <property type="evidence" value="ECO:0000318"/>
    <property type="project" value="GO_Central"/>
</dbReference>
<dbReference type="GO" id="GO:0017056">
    <property type="term" value="F:structural constituent of nuclear pore"/>
    <property type="evidence" value="ECO:0000315"/>
    <property type="project" value="UniProtKB"/>
</dbReference>
<dbReference type="GO" id="GO:0007129">
    <property type="term" value="P:homologous chromosome pairing at meiosis"/>
    <property type="evidence" value="ECO:0007669"/>
    <property type="project" value="Ensembl"/>
</dbReference>
<dbReference type="GO" id="GO:0051028">
    <property type="term" value="P:mRNA transport"/>
    <property type="evidence" value="ECO:0007669"/>
    <property type="project" value="UniProtKB-KW"/>
</dbReference>
<dbReference type="GO" id="GO:0051292">
    <property type="term" value="P:nuclear pore complex assembly"/>
    <property type="evidence" value="ECO:0000315"/>
    <property type="project" value="UniProtKB"/>
</dbReference>
<dbReference type="GO" id="GO:0051664">
    <property type="term" value="P:nuclear pore localization"/>
    <property type="evidence" value="ECO:0000315"/>
    <property type="project" value="UniProtKB"/>
</dbReference>
<dbReference type="GO" id="GO:0006999">
    <property type="term" value="P:nuclear pore organization"/>
    <property type="evidence" value="ECO:0000318"/>
    <property type="project" value="GO_Central"/>
</dbReference>
<dbReference type="GO" id="GO:0006913">
    <property type="term" value="P:nucleocytoplasmic transport"/>
    <property type="evidence" value="ECO:0000303"/>
    <property type="project" value="ComplexPortal"/>
</dbReference>
<dbReference type="GO" id="GO:0015031">
    <property type="term" value="P:protein transport"/>
    <property type="evidence" value="ECO:0000303"/>
    <property type="project" value="UniProtKB"/>
</dbReference>
<dbReference type="GO" id="GO:0007283">
    <property type="term" value="P:spermatogenesis"/>
    <property type="evidence" value="ECO:0007669"/>
    <property type="project" value="Ensembl"/>
</dbReference>
<dbReference type="InterPro" id="IPR019049">
    <property type="entry name" value="Nucleoporin_prot_Ndc1/Nup"/>
</dbReference>
<dbReference type="PANTHER" id="PTHR13269">
    <property type="entry name" value="NUCLEOPORIN NDC1"/>
    <property type="match status" value="1"/>
</dbReference>
<dbReference type="PANTHER" id="PTHR13269:SF6">
    <property type="entry name" value="NUCLEOPORIN NDC1"/>
    <property type="match status" value="1"/>
</dbReference>
<dbReference type="Pfam" id="PF09531">
    <property type="entry name" value="Ndc1_Nup"/>
    <property type="match status" value="1"/>
</dbReference>
<reference key="1">
    <citation type="journal article" date="2006" name="J. Cell Biol.">
        <title>NDC1: a crucial membrane-integral nucleoporin of metazoan nuclear pore complexes.</title>
        <authorList>
            <person name="Stavru F."/>
            <person name="Hulsmann B.B."/>
            <person name="Spang A."/>
            <person name="Hartmann E."/>
            <person name="Cordes V.C."/>
            <person name="Gorlich D."/>
        </authorList>
    </citation>
    <scope>NUCLEOTIDE SEQUENCE [MRNA] (ISOFORM 1)</scope>
    <scope>VARIANT ASP-154</scope>
    <scope>FUNCTION</scope>
    <scope>SUBCELLULAR LOCATION</scope>
    <scope>MISCELLANEOUS</scope>
</reference>
<reference key="2">
    <citation type="journal article" date="2004" name="Nat. Genet.">
        <title>Complete sequencing and characterization of 21,243 full-length human cDNAs.</title>
        <authorList>
            <person name="Ota T."/>
            <person name="Suzuki Y."/>
            <person name="Nishikawa T."/>
            <person name="Otsuki T."/>
            <person name="Sugiyama T."/>
            <person name="Irie R."/>
            <person name="Wakamatsu A."/>
            <person name="Hayashi K."/>
            <person name="Sato H."/>
            <person name="Nagai K."/>
            <person name="Kimura K."/>
            <person name="Makita H."/>
            <person name="Sekine M."/>
            <person name="Obayashi M."/>
            <person name="Nishi T."/>
            <person name="Shibahara T."/>
            <person name="Tanaka T."/>
            <person name="Ishii S."/>
            <person name="Yamamoto J."/>
            <person name="Saito K."/>
            <person name="Kawai Y."/>
            <person name="Isono Y."/>
            <person name="Nakamura Y."/>
            <person name="Nagahari K."/>
            <person name="Murakami K."/>
            <person name="Yasuda T."/>
            <person name="Iwayanagi T."/>
            <person name="Wagatsuma M."/>
            <person name="Shiratori A."/>
            <person name="Sudo H."/>
            <person name="Hosoiri T."/>
            <person name="Kaku Y."/>
            <person name="Kodaira H."/>
            <person name="Kondo H."/>
            <person name="Sugawara M."/>
            <person name="Takahashi M."/>
            <person name="Kanda K."/>
            <person name="Yokoi T."/>
            <person name="Furuya T."/>
            <person name="Kikkawa E."/>
            <person name="Omura Y."/>
            <person name="Abe K."/>
            <person name="Kamihara K."/>
            <person name="Katsuta N."/>
            <person name="Sato K."/>
            <person name="Tanikawa M."/>
            <person name="Yamazaki M."/>
            <person name="Ninomiya K."/>
            <person name="Ishibashi T."/>
            <person name="Yamashita H."/>
            <person name="Murakawa K."/>
            <person name="Fujimori K."/>
            <person name="Tanai H."/>
            <person name="Kimata M."/>
            <person name="Watanabe M."/>
            <person name="Hiraoka S."/>
            <person name="Chiba Y."/>
            <person name="Ishida S."/>
            <person name="Ono Y."/>
            <person name="Takiguchi S."/>
            <person name="Watanabe S."/>
            <person name="Yosida M."/>
            <person name="Hotuta T."/>
            <person name="Kusano J."/>
            <person name="Kanehori K."/>
            <person name="Takahashi-Fujii A."/>
            <person name="Hara H."/>
            <person name="Tanase T.-O."/>
            <person name="Nomura Y."/>
            <person name="Togiya S."/>
            <person name="Komai F."/>
            <person name="Hara R."/>
            <person name="Takeuchi K."/>
            <person name="Arita M."/>
            <person name="Imose N."/>
            <person name="Musashino K."/>
            <person name="Yuuki H."/>
            <person name="Oshima A."/>
            <person name="Sasaki N."/>
            <person name="Aotsuka S."/>
            <person name="Yoshikawa Y."/>
            <person name="Matsunawa H."/>
            <person name="Ichihara T."/>
            <person name="Shiohata N."/>
            <person name="Sano S."/>
            <person name="Moriya S."/>
            <person name="Momiyama H."/>
            <person name="Satoh N."/>
            <person name="Takami S."/>
            <person name="Terashima Y."/>
            <person name="Suzuki O."/>
            <person name="Nakagawa S."/>
            <person name="Senoh A."/>
            <person name="Mizoguchi H."/>
            <person name="Goto Y."/>
            <person name="Shimizu F."/>
            <person name="Wakebe H."/>
            <person name="Hishigaki H."/>
            <person name="Watanabe T."/>
            <person name="Sugiyama A."/>
            <person name="Takemoto M."/>
            <person name="Kawakami B."/>
            <person name="Yamazaki M."/>
            <person name="Watanabe K."/>
            <person name="Kumagai A."/>
            <person name="Itakura S."/>
            <person name="Fukuzumi Y."/>
            <person name="Fujimori Y."/>
            <person name="Komiyama M."/>
            <person name="Tashiro H."/>
            <person name="Tanigami A."/>
            <person name="Fujiwara T."/>
            <person name="Ono T."/>
            <person name="Yamada K."/>
            <person name="Fujii Y."/>
            <person name="Ozaki K."/>
            <person name="Hirao M."/>
            <person name="Ohmori Y."/>
            <person name="Kawabata A."/>
            <person name="Hikiji T."/>
            <person name="Kobatake N."/>
            <person name="Inagaki H."/>
            <person name="Ikema Y."/>
            <person name="Okamoto S."/>
            <person name="Okitani R."/>
            <person name="Kawakami T."/>
            <person name="Noguchi S."/>
            <person name="Itoh T."/>
            <person name="Shigeta K."/>
            <person name="Senba T."/>
            <person name="Matsumura K."/>
            <person name="Nakajima Y."/>
            <person name="Mizuno T."/>
            <person name="Morinaga M."/>
            <person name="Sasaki M."/>
            <person name="Togashi T."/>
            <person name="Oyama M."/>
            <person name="Hata H."/>
            <person name="Watanabe M."/>
            <person name="Komatsu T."/>
            <person name="Mizushima-Sugano J."/>
            <person name="Satoh T."/>
            <person name="Shirai Y."/>
            <person name="Takahashi Y."/>
            <person name="Nakagawa K."/>
            <person name="Okumura K."/>
            <person name="Nagase T."/>
            <person name="Nomura N."/>
            <person name="Kikuchi H."/>
            <person name="Masuho Y."/>
            <person name="Yamashita R."/>
            <person name="Nakai K."/>
            <person name="Yada T."/>
            <person name="Nakamura Y."/>
            <person name="Ohara O."/>
            <person name="Isogai T."/>
            <person name="Sugano S."/>
        </authorList>
    </citation>
    <scope>NUCLEOTIDE SEQUENCE [LARGE SCALE MRNA] (ISOFORMS 1; 5 AND 6)</scope>
    <scope>NUCLEOTIDE SEQUENCE [LARGE SCALE MRNA] OF 225-674 (ISOFORM 3)</scope>
    <source>
        <tissue>Brain</tissue>
        <tissue>Teratocarcinoma</tissue>
    </source>
</reference>
<reference key="3">
    <citation type="submission" date="2000-04" db="EMBL/GenBank/DDBJ databases">
        <authorList>
            <person name="Rhodes S."/>
            <person name="Huckle E."/>
        </authorList>
    </citation>
    <scope>NUCLEOTIDE SEQUENCE [LARGE SCALE MRNA] (ISOFORM 2)</scope>
</reference>
<reference key="4">
    <citation type="journal article" date="2006" name="Nature">
        <title>The DNA sequence and biological annotation of human chromosome 1.</title>
        <authorList>
            <person name="Gregory S.G."/>
            <person name="Barlow K.F."/>
            <person name="McLay K.E."/>
            <person name="Kaul R."/>
            <person name="Swarbreck D."/>
            <person name="Dunham A."/>
            <person name="Scott C.E."/>
            <person name="Howe K.L."/>
            <person name="Woodfine K."/>
            <person name="Spencer C.C.A."/>
            <person name="Jones M.C."/>
            <person name="Gillson C."/>
            <person name="Searle S."/>
            <person name="Zhou Y."/>
            <person name="Kokocinski F."/>
            <person name="McDonald L."/>
            <person name="Evans R."/>
            <person name="Phillips K."/>
            <person name="Atkinson A."/>
            <person name="Cooper R."/>
            <person name="Jones C."/>
            <person name="Hall R.E."/>
            <person name="Andrews T.D."/>
            <person name="Lloyd C."/>
            <person name="Ainscough R."/>
            <person name="Almeida J.P."/>
            <person name="Ambrose K.D."/>
            <person name="Anderson F."/>
            <person name="Andrew R.W."/>
            <person name="Ashwell R.I.S."/>
            <person name="Aubin K."/>
            <person name="Babbage A.K."/>
            <person name="Bagguley C.L."/>
            <person name="Bailey J."/>
            <person name="Beasley H."/>
            <person name="Bethel G."/>
            <person name="Bird C.P."/>
            <person name="Bray-Allen S."/>
            <person name="Brown J.Y."/>
            <person name="Brown A.J."/>
            <person name="Buckley D."/>
            <person name="Burton J."/>
            <person name="Bye J."/>
            <person name="Carder C."/>
            <person name="Chapman J.C."/>
            <person name="Clark S.Y."/>
            <person name="Clarke G."/>
            <person name="Clee C."/>
            <person name="Cobley V."/>
            <person name="Collier R.E."/>
            <person name="Corby N."/>
            <person name="Coville G.J."/>
            <person name="Davies J."/>
            <person name="Deadman R."/>
            <person name="Dunn M."/>
            <person name="Earthrowl M."/>
            <person name="Ellington A.G."/>
            <person name="Errington H."/>
            <person name="Frankish A."/>
            <person name="Frankland J."/>
            <person name="French L."/>
            <person name="Garner P."/>
            <person name="Garnett J."/>
            <person name="Gay L."/>
            <person name="Ghori M.R.J."/>
            <person name="Gibson R."/>
            <person name="Gilby L.M."/>
            <person name="Gillett W."/>
            <person name="Glithero R.J."/>
            <person name="Grafham D.V."/>
            <person name="Griffiths C."/>
            <person name="Griffiths-Jones S."/>
            <person name="Grocock R."/>
            <person name="Hammond S."/>
            <person name="Harrison E.S.I."/>
            <person name="Hart E."/>
            <person name="Haugen E."/>
            <person name="Heath P.D."/>
            <person name="Holmes S."/>
            <person name="Holt K."/>
            <person name="Howden P.J."/>
            <person name="Hunt A.R."/>
            <person name="Hunt S.E."/>
            <person name="Hunter G."/>
            <person name="Isherwood J."/>
            <person name="James R."/>
            <person name="Johnson C."/>
            <person name="Johnson D."/>
            <person name="Joy A."/>
            <person name="Kay M."/>
            <person name="Kershaw J.K."/>
            <person name="Kibukawa M."/>
            <person name="Kimberley A.M."/>
            <person name="King A."/>
            <person name="Knights A.J."/>
            <person name="Lad H."/>
            <person name="Laird G."/>
            <person name="Lawlor S."/>
            <person name="Leongamornlert D.A."/>
            <person name="Lloyd D.M."/>
            <person name="Loveland J."/>
            <person name="Lovell J."/>
            <person name="Lush M.J."/>
            <person name="Lyne R."/>
            <person name="Martin S."/>
            <person name="Mashreghi-Mohammadi M."/>
            <person name="Matthews L."/>
            <person name="Matthews N.S.W."/>
            <person name="McLaren S."/>
            <person name="Milne S."/>
            <person name="Mistry S."/>
            <person name="Moore M.J.F."/>
            <person name="Nickerson T."/>
            <person name="O'Dell C.N."/>
            <person name="Oliver K."/>
            <person name="Palmeiri A."/>
            <person name="Palmer S.A."/>
            <person name="Parker A."/>
            <person name="Patel D."/>
            <person name="Pearce A.V."/>
            <person name="Peck A.I."/>
            <person name="Pelan S."/>
            <person name="Phelps K."/>
            <person name="Phillimore B.J."/>
            <person name="Plumb R."/>
            <person name="Rajan J."/>
            <person name="Raymond C."/>
            <person name="Rouse G."/>
            <person name="Saenphimmachak C."/>
            <person name="Sehra H.K."/>
            <person name="Sheridan E."/>
            <person name="Shownkeen R."/>
            <person name="Sims S."/>
            <person name="Skuce C.D."/>
            <person name="Smith M."/>
            <person name="Steward C."/>
            <person name="Subramanian S."/>
            <person name="Sycamore N."/>
            <person name="Tracey A."/>
            <person name="Tromans A."/>
            <person name="Van Helmond Z."/>
            <person name="Wall M."/>
            <person name="Wallis J.M."/>
            <person name="White S."/>
            <person name="Whitehead S.L."/>
            <person name="Wilkinson J.E."/>
            <person name="Willey D.L."/>
            <person name="Williams H."/>
            <person name="Wilming L."/>
            <person name="Wray P.W."/>
            <person name="Wu Z."/>
            <person name="Coulson A."/>
            <person name="Vaudin M."/>
            <person name="Sulston J.E."/>
            <person name="Durbin R.M."/>
            <person name="Hubbard T."/>
            <person name="Wooster R."/>
            <person name="Dunham I."/>
            <person name="Carter N.P."/>
            <person name="McVean G."/>
            <person name="Ross M.T."/>
            <person name="Harrow J."/>
            <person name="Olson M.V."/>
            <person name="Beck S."/>
            <person name="Rogers J."/>
            <person name="Bentley D.R."/>
        </authorList>
    </citation>
    <scope>NUCLEOTIDE SEQUENCE [LARGE SCALE GENOMIC DNA]</scope>
</reference>
<reference key="5">
    <citation type="submission" date="2005-09" db="EMBL/GenBank/DDBJ databases">
        <authorList>
            <person name="Mural R.J."/>
            <person name="Istrail S."/>
            <person name="Sutton G."/>
            <person name="Florea L."/>
            <person name="Halpern A.L."/>
            <person name="Mobarry C.M."/>
            <person name="Lippert R."/>
            <person name="Walenz B."/>
            <person name="Shatkay H."/>
            <person name="Dew I."/>
            <person name="Miller J.R."/>
            <person name="Flanigan M.J."/>
            <person name="Edwards N.J."/>
            <person name="Bolanos R."/>
            <person name="Fasulo D."/>
            <person name="Halldorsson B.V."/>
            <person name="Hannenhalli S."/>
            <person name="Turner R."/>
            <person name="Yooseph S."/>
            <person name="Lu F."/>
            <person name="Nusskern D.R."/>
            <person name="Shue B.C."/>
            <person name="Zheng X.H."/>
            <person name="Zhong F."/>
            <person name="Delcher A.L."/>
            <person name="Huson D.H."/>
            <person name="Kravitz S.A."/>
            <person name="Mouchard L."/>
            <person name="Reinert K."/>
            <person name="Remington K.A."/>
            <person name="Clark A.G."/>
            <person name="Waterman M.S."/>
            <person name="Eichler E.E."/>
            <person name="Adams M.D."/>
            <person name="Hunkapiller M.W."/>
            <person name="Myers E.W."/>
            <person name="Venter J.C."/>
        </authorList>
    </citation>
    <scope>NUCLEOTIDE SEQUENCE [LARGE SCALE GENOMIC DNA]</scope>
</reference>
<reference key="6">
    <citation type="journal article" date="2004" name="Genome Res.">
        <title>The status, quality, and expansion of the NIH full-length cDNA project: the Mammalian Gene Collection (MGC).</title>
        <authorList>
            <consortium name="The MGC Project Team"/>
        </authorList>
    </citation>
    <scope>NUCLEOTIDE SEQUENCE [LARGE SCALE MRNA] (ISOFORM 1)</scope>
    <scope>VARIANT ASP-154</scope>
    <source>
        <tissue>Brain</tissue>
    </source>
</reference>
<reference key="7">
    <citation type="journal article" date="2003" name="Science">
        <title>Nuclear membrane proteins with potential disease links found by subtractive proteomics.</title>
        <authorList>
            <person name="Schirmer E.C."/>
            <person name="Florens L."/>
            <person name="Guan T."/>
            <person name="Yates J.R. III"/>
            <person name="Gerace L."/>
        </authorList>
    </citation>
    <scope>IDENTIFICATION BY MASS SPECTROMETRY</scope>
    <scope>SUBCELLULAR LOCATION</scope>
</reference>
<reference key="8">
    <citation type="journal article" date="2006" name="Cell">
        <title>Global, in vivo, and site-specific phosphorylation dynamics in signaling networks.</title>
        <authorList>
            <person name="Olsen J.V."/>
            <person name="Blagoev B."/>
            <person name="Gnad F."/>
            <person name="Macek B."/>
            <person name="Kumar C."/>
            <person name="Mortensen P."/>
            <person name="Mann M."/>
        </authorList>
    </citation>
    <scope>PHOSPHORYLATION [LARGE SCALE ANALYSIS] AT SER-406</scope>
    <scope>IDENTIFICATION BY MASS SPECTROMETRY [LARGE SCALE ANALYSIS]</scope>
    <source>
        <tissue>Cervix carcinoma</tissue>
    </source>
</reference>
<reference key="9">
    <citation type="journal article" date="2006" name="Mol. Cell">
        <title>The conserved transmembrane nucleoporin NDC1 is required for nuclear pore complex assembly in vertebrate cells.</title>
        <authorList>
            <person name="Mansfeld J."/>
            <person name="Guettinger S."/>
            <person name="Hawryluk-Gara L.A."/>
            <person name="Pante N."/>
            <person name="Mall M."/>
            <person name="Galy V."/>
            <person name="Haselmann U."/>
            <person name="Muehlhaeusser P."/>
            <person name="Wozniak R.W."/>
            <person name="Mattaj I.W."/>
            <person name="Kutay U."/>
            <person name="Antonin W."/>
        </authorList>
    </citation>
    <scope>FUNCTION</scope>
    <scope>SUBCELLULAR LOCATION</scope>
    <scope>TOPOLOGY</scope>
    <scope>PHOSPHORYLATION</scope>
</reference>
<reference key="10">
    <citation type="journal article" date="2008" name="Mol. Cell">
        <title>Kinase-selective enrichment enables quantitative phosphoproteomics of the kinome across the cell cycle.</title>
        <authorList>
            <person name="Daub H."/>
            <person name="Olsen J.V."/>
            <person name="Bairlein M."/>
            <person name="Gnad F."/>
            <person name="Oppermann F.S."/>
            <person name="Korner R."/>
            <person name="Greff Z."/>
            <person name="Keri G."/>
            <person name="Stemmann O."/>
            <person name="Mann M."/>
        </authorList>
    </citation>
    <scope>PHOSPHORYLATION [LARGE SCALE ANALYSIS] AT SER-406</scope>
    <scope>IDENTIFICATION BY MASS SPECTROMETRY [LARGE SCALE ANALYSIS]</scope>
    <source>
        <tissue>Cervix carcinoma</tissue>
    </source>
</reference>
<reference key="11">
    <citation type="journal article" date="2008" name="Proc. Natl. Acad. Sci. U.S.A.">
        <title>A quantitative atlas of mitotic phosphorylation.</title>
        <authorList>
            <person name="Dephoure N."/>
            <person name="Zhou C."/>
            <person name="Villen J."/>
            <person name="Beausoleil S.A."/>
            <person name="Bakalarski C.E."/>
            <person name="Elledge S.J."/>
            <person name="Gygi S.P."/>
        </authorList>
    </citation>
    <scope>PHOSPHORYLATION [LARGE SCALE ANALYSIS] AT SER-439; THR-440; SER-445; THR-449; SER-471 AND SER-474</scope>
    <scope>IDENTIFICATION BY MASS SPECTROMETRY [LARGE SCALE ANALYSIS]</scope>
    <source>
        <tissue>Cervix carcinoma</tissue>
    </source>
</reference>
<reference key="12">
    <citation type="journal article" date="2009" name="Biochem. Biophys. Res. Commun.">
        <title>The nuclear pore complex protein ALADIN is anchored via NDC1 but not via POM121 and GP210 in the nuclear envelope.</title>
        <authorList>
            <person name="Kind B."/>
            <person name="Koehler K."/>
            <person name="Lorenz M."/>
            <person name="Huebner A."/>
        </authorList>
    </citation>
    <scope>SUBCELLULAR LOCATION</scope>
    <scope>INTERACTION WITH AAAS</scope>
</reference>
<reference key="13">
    <citation type="journal article" date="2009" name="Sci. Signal.">
        <title>Quantitative phosphoproteomic analysis of T cell receptor signaling reveals system-wide modulation of protein-protein interactions.</title>
        <authorList>
            <person name="Mayya V."/>
            <person name="Lundgren D.H."/>
            <person name="Hwang S.-I."/>
            <person name="Rezaul K."/>
            <person name="Wu L."/>
            <person name="Eng J.K."/>
            <person name="Rodionov V."/>
            <person name="Han D.K."/>
        </authorList>
    </citation>
    <scope>IDENTIFICATION BY MASS SPECTROMETRY [LARGE SCALE ANALYSIS]</scope>
    <source>
        <tissue>Leukemic T-cell</tissue>
    </source>
</reference>
<reference key="14">
    <citation type="journal article" date="2010" name="Sci. Signal.">
        <title>Quantitative phosphoproteomics reveals widespread full phosphorylation site occupancy during mitosis.</title>
        <authorList>
            <person name="Olsen J.V."/>
            <person name="Vermeulen M."/>
            <person name="Santamaria A."/>
            <person name="Kumar C."/>
            <person name="Miller M.L."/>
            <person name="Jensen L.J."/>
            <person name="Gnad F."/>
            <person name="Cox J."/>
            <person name="Jensen T.S."/>
            <person name="Nigg E.A."/>
            <person name="Brunak S."/>
            <person name="Mann M."/>
        </authorList>
    </citation>
    <scope>PHOSPHORYLATION [LARGE SCALE ANALYSIS] AT SER-406; THR-414; SER-445; SER-471 AND SER-474</scope>
    <scope>IDENTIFICATION BY MASS SPECTROMETRY [LARGE SCALE ANALYSIS]</scope>
    <source>
        <tissue>Cervix carcinoma</tissue>
    </source>
</reference>
<reference key="15">
    <citation type="journal article" date="2013" name="J. Proteome Res.">
        <title>Toward a comprehensive characterization of a human cancer cell phosphoproteome.</title>
        <authorList>
            <person name="Zhou H."/>
            <person name="Di Palma S."/>
            <person name="Preisinger C."/>
            <person name="Peng M."/>
            <person name="Polat A.N."/>
            <person name="Heck A.J."/>
            <person name="Mohammed S."/>
        </authorList>
    </citation>
    <scope>PHOSPHORYLATION [LARGE SCALE ANALYSIS] AT SER-406 AND THR-414</scope>
    <scope>IDENTIFICATION BY MASS SPECTROMETRY [LARGE SCALE ANALYSIS]</scope>
    <source>
        <tissue>Cervix carcinoma</tissue>
        <tissue>Erythroleukemia</tissue>
    </source>
</reference>
<reference key="16">
    <citation type="journal article" date="2015" name="Proteomics">
        <title>N-terminome analysis of the human mitochondrial proteome.</title>
        <authorList>
            <person name="Vaca Jacome A.S."/>
            <person name="Rabilloud T."/>
            <person name="Schaeffer-Reiss C."/>
            <person name="Rompais M."/>
            <person name="Ayoub D."/>
            <person name="Lane L."/>
            <person name="Bairoch A."/>
            <person name="Van Dorsselaer A."/>
            <person name="Carapito C."/>
        </authorList>
    </citation>
    <scope>IDENTIFICATION BY MASS SPECTROMETRY [LARGE SCALE ANALYSIS]</scope>
</reference>
<comment type="function">
    <text evidence="5 6">Component of the nuclear pore complex (NPC), which plays a key role in de novo assembly and insertion of NPC in the nuclear envelope. Required for NPC and nuclear envelope assembly, possibly by forming a link between the nuclear envelope membrane and soluble nucleoporins, thereby anchoring the NPC in the membrane.</text>
</comment>
<comment type="subunit">
    <text evidence="1 7">Interacts with the NUP35/NUP53 (By similarity). Interacts with AAAS, anchoring it to the nuclear envelope.</text>
</comment>
<comment type="subcellular location">
    <subcellularLocation>
        <location>Nucleus</location>
        <location>Nuclear pore complex</location>
    </subcellularLocation>
    <subcellularLocation>
        <location>Nucleus membrane</location>
        <topology>Multi-pass membrane protein</topology>
    </subcellularLocation>
    <text>Central core structure of the nuclear pore complex.</text>
</comment>
<comment type="alternative products">
    <event type="alternative splicing"/>
    <isoform>
        <id>Q9BTX1-1</id>
        <name>1</name>
        <sequence type="displayed"/>
    </isoform>
    <isoform>
        <id>Q9BTX1-2</id>
        <name>2</name>
        <sequence type="described" ref="VSP_018396"/>
    </isoform>
    <isoform>
        <id>Q9BTX1-3</id>
        <name>3</name>
        <sequence type="described" ref="VSP_018397"/>
    </isoform>
    <isoform>
        <id>Q9BTX1-4</id>
        <name>4</name>
        <sequence type="described" ref="VSP_018398 VSP_018399"/>
    </isoform>
    <isoform>
        <id>Q9BTX1-5</id>
        <name>5</name>
        <sequence type="described" ref="VSP_055332"/>
    </isoform>
    <isoform>
        <id>Q9BTX1-6</id>
        <name>6</name>
        <sequence type="described" ref="VSP_055331"/>
    </isoform>
</comment>
<comment type="miscellaneous">
    <text>Depletion of NDC1 from HeLa cells interferes with the assembly of phenylalanine-glycine (FG) repeat Nups into nuclear pore complexes.</text>
</comment>
<comment type="similarity">
    <text evidence="10">Belongs to the NDC1 family.</text>
</comment>
<comment type="sequence caution" evidence="10">
    <conflict type="erroneous initiation">
        <sequence resource="EMBL-CDS" id="BAB14135"/>
    </conflict>
</comment>
<comment type="sequence caution" evidence="10">
    <conflict type="erroneous initiation">
        <sequence resource="EMBL-CDS" id="BAC03665"/>
    </conflict>
</comment>
<name>NDC1_HUMAN</name>
<evidence type="ECO:0000250" key="1">
    <source>
        <dbReference type="UniProtKB" id="Q6AXN4"/>
    </source>
</evidence>
<evidence type="ECO:0000255" key="2"/>
<evidence type="ECO:0000256" key="3">
    <source>
        <dbReference type="SAM" id="MobiDB-lite"/>
    </source>
</evidence>
<evidence type="ECO:0000269" key="4">
    <source>
    </source>
</evidence>
<evidence type="ECO:0000269" key="5">
    <source>
    </source>
</evidence>
<evidence type="ECO:0000269" key="6">
    <source>
    </source>
</evidence>
<evidence type="ECO:0000269" key="7">
    <source>
    </source>
</evidence>
<evidence type="ECO:0000303" key="8">
    <source>
    </source>
</evidence>
<evidence type="ECO:0000303" key="9">
    <source ref="3"/>
</evidence>
<evidence type="ECO:0000305" key="10"/>
<evidence type="ECO:0007744" key="11">
    <source>
    </source>
</evidence>
<evidence type="ECO:0007744" key="12">
    <source>
    </source>
</evidence>
<evidence type="ECO:0007744" key="13">
    <source>
    </source>
</evidence>
<evidence type="ECO:0007744" key="14">
    <source>
    </source>
</evidence>
<evidence type="ECO:0007744" key="15">
    <source>
    </source>
</evidence>
<accession>Q9BTX1</accession>
<accession>B4DHA3</accession>
<accession>B4DQQ5</accession>
<accession>G3XA81</accession>
<accession>Q8NB76</accession>
<accession>Q9H9T6</accession>
<accession>Q9NSG3</accession>
<accession>Q9NSG4</accession>
<accession>Q9NVZ7</accession>
<feature type="chain" id="PRO_0000235240" description="Nucleoporin NDC1">
    <location>
        <begin position="1"/>
        <end position="674"/>
    </location>
</feature>
<feature type="topological domain" description="Cytoplasmic" evidence="2">
    <location>
        <begin position="1"/>
        <end position="24"/>
    </location>
</feature>
<feature type="transmembrane region" description="Helical; Name=1" evidence="2">
    <location>
        <begin position="25"/>
        <end position="45"/>
    </location>
</feature>
<feature type="topological domain" description="Perinuclear space" evidence="2">
    <location>
        <begin position="46"/>
        <end position="68"/>
    </location>
</feature>
<feature type="transmembrane region" description="Helical; Name=2" evidence="2">
    <location>
        <begin position="69"/>
        <end position="89"/>
    </location>
</feature>
<feature type="topological domain" description="Cytoplasmic" evidence="2">
    <location>
        <begin position="90"/>
        <end position="114"/>
    </location>
</feature>
<feature type="transmembrane region" description="Helical; Name=3" evidence="2">
    <location>
        <begin position="115"/>
        <end position="135"/>
    </location>
</feature>
<feature type="topological domain" description="Perinuclear space" evidence="2">
    <location>
        <begin position="136"/>
        <end position="165"/>
    </location>
</feature>
<feature type="transmembrane region" description="Helical; Name=4" evidence="2">
    <location>
        <begin position="166"/>
        <end position="186"/>
    </location>
</feature>
<feature type="topological domain" description="Cytoplasmic" evidence="2">
    <location>
        <begin position="187"/>
        <end position="225"/>
    </location>
</feature>
<feature type="transmembrane region" description="Helical; Name=5" evidence="2">
    <location>
        <begin position="226"/>
        <end position="246"/>
    </location>
</feature>
<feature type="topological domain" description="Perinuclear space" evidence="2">
    <location>
        <begin position="247"/>
        <end position="272"/>
    </location>
</feature>
<feature type="transmembrane region" description="Helical; Name=6" evidence="2">
    <location>
        <begin position="273"/>
        <end position="293"/>
    </location>
</feature>
<feature type="topological domain" description="Cytoplasmic" evidence="2">
    <location>
        <begin position="294"/>
        <end position="674"/>
    </location>
</feature>
<feature type="region of interest" description="Disordered" evidence="3">
    <location>
        <begin position="394"/>
        <end position="425"/>
    </location>
</feature>
<feature type="compositionally biased region" description="Polar residues" evidence="3">
    <location>
        <begin position="407"/>
        <end position="421"/>
    </location>
</feature>
<feature type="modified residue" description="Phosphoserine" evidence="11 13 14 15">
    <location>
        <position position="406"/>
    </location>
</feature>
<feature type="modified residue" description="Phosphothreonine" evidence="14 15">
    <location>
        <position position="414"/>
    </location>
</feature>
<feature type="modified residue" description="Phosphoserine" evidence="12">
    <location>
        <position position="439"/>
    </location>
</feature>
<feature type="modified residue" description="Phosphothreonine" evidence="12">
    <location>
        <position position="440"/>
    </location>
</feature>
<feature type="modified residue" description="Phosphoserine" evidence="12 14">
    <location>
        <position position="445"/>
    </location>
</feature>
<feature type="modified residue" description="Phosphothreonine" evidence="12">
    <location>
        <position position="449"/>
    </location>
</feature>
<feature type="modified residue" description="Phosphoserine" evidence="12 14">
    <location>
        <position position="471"/>
    </location>
</feature>
<feature type="modified residue" description="Phosphoserine" evidence="12 14">
    <location>
        <position position="474"/>
    </location>
</feature>
<feature type="splice variant" id="VSP_055331" description="In isoform 6." evidence="8">
    <location>
        <begin position="1"/>
        <end position="115"/>
    </location>
</feature>
<feature type="splice variant" id="VSP_018396" description="In isoform 2." evidence="9">
    <location>
        <position position="93"/>
    </location>
</feature>
<feature type="splice variant" id="VSP_055332" description="In isoform 5." evidence="8">
    <original>VPSIPCSRLALIGKIIHPQQLMHSFIHAAMGMVMAWCAAVI</original>
    <variation>I</variation>
    <location>
        <begin position="95"/>
        <end position="135"/>
    </location>
</feature>
<feature type="splice variant" id="VSP_018397" description="In isoform 3." evidence="8">
    <location>
        <begin position="376"/>
        <end position="492"/>
    </location>
</feature>
<feature type="splice variant" id="VSP_018398" description="In isoform 4." evidence="10">
    <original>GKTMRQPSVIYSWIQNKREQIKNFLSKRVLIMYF</original>
    <variation>APRGLHSGCFFRCPNAYLGIRRSVALSSSIIYRG</variation>
    <location>
        <begin position="509"/>
        <end position="542"/>
    </location>
</feature>
<feature type="splice variant" id="VSP_018399" description="In isoform 4." evidence="10">
    <location>
        <begin position="543"/>
        <end position="674"/>
    </location>
</feature>
<feature type="sequence variant" id="VAR_026388" description="In dbSNP:rs17849721." evidence="4 6">
    <original>G</original>
    <variation>D</variation>
    <location>
        <position position="154"/>
    </location>
</feature>
<feature type="sequence conflict" description="In Ref. 2; BAG58064." evidence="10" ref="2">
    <original>V</original>
    <variation>A</variation>
    <location>
        <position position="261"/>
    </location>
</feature>
<feature type="sequence conflict" description="In Ref. 2; BAG58064." evidence="10" ref="2">
    <original>Q</original>
    <variation>R</variation>
    <location>
        <position position="476"/>
    </location>
</feature>
<feature type="sequence conflict" description="In Ref. 2; BAG61017." evidence="10" ref="2">
    <original>K</original>
    <variation>R</variation>
    <location>
        <position position="525"/>
    </location>
</feature>
<organism>
    <name type="scientific">Homo sapiens</name>
    <name type="common">Human</name>
    <dbReference type="NCBI Taxonomy" id="9606"/>
    <lineage>
        <taxon>Eukaryota</taxon>
        <taxon>Metazoa</taxon>
        <taxon>Chordata</taxon>
        <taxon>Craniata</taxon>
        <taxon>Vertebrata</taxon>
        <taxon>Euteleostomi</taxon>
        <taxon>Mammalia</taxon>
        <taxon>Eutheria</taxon>
        <taxon>Euarchontoglires</taxon>
        <taxon>Primates</taxon>
        <taxon>Haplorrhini</taxon>
        <taxon>Catarrhini</taxon>
        <taxon>Hominidae</taxon>
        <taxon>Homo</taxon>
    </lineage>
</organism>
<protein>
    <recommendedName>
        <fullName>Nucleoporin NDC1</fullName>
        <shortName>hNDC1</shortName>
    </recommendedName>
    <alternativeName>
        <fullName>Transmembrane protein 48</fullName>
    </alternativeName>
</protein>
<keyword id="KW-0002">3D-structure</keyword>
<keyword id="KW-0025">Alternative splicing</keyword>
<keyword id="KW-0472">Membrane</keyword>
<keyword id="KW-0509">mRNA transport</keyword>
<keyword id="KW-0906">Nuclear pore complex</keyword>
<keyword id="KW-0539">Nucleus</keyword>
<keyword id="KW-0597">Phosphoprotein</keyword>
<keyword id="KW-0653">Protein transport</keyword>
<keyword id="KW-1267">Proteomics identification</keyword>
<keyword id="KW-1185">Reference proteome</keyword>
<keyword id="KW-0811">Translocation</keyword>
<keyword id="KW-0812">Transmembrane</keyword>
<keyword id="KW-1133">Transmembrane helix</keyword>
<keyword id="KW-0813">Transport</keyword>
<gene>
    <name type="primary">NDC1</name>
    <name type="synonym">TMEM48</name>
</gene>